<proteinExistence type="inferred from homology"/>
<protein>
    <recommendedName>
        <fullName evidence="1">Anthranilate phosphoribosyltransferase</fullName>
        <ecNumber evidence="1">2.4.2.18</ecNumber>
    </recommendedName>
</protein>
<gene>
    <name evidence="1" type="primary">trpD</name>
    <name type="ordered locus">NTHI1764</name>
</gene>
<name>TRPD_HAEI8</name>
<sequence>MQHNQLLEQLYSGHSLSTSESTALFNAVIQGELSNEQIAAMLIALKVREANTEEITGAVAASLQNAKVFPRPDYPFADIVGTGGDGQNTINISTASAIVAASMGAKVAKHGNRSVSSKSGASDVLTALGVNVNVTPEQARQALDEIGVCFLFAQQYHSGFRHVAPVRTALKTHTIFNILGPLINPARPTYHLLGVYAPELVKTYAETAVALEHQHSFVVHGSGLDEVALHGETQVAEIKNGKIEYFTLTPEDFGLKTQSLESLRGGEPQENTQYLTALLQGKGKAEHANAVAANTALLLKLFGYDDLKQNVQNVLAHLASGNAFKTLQKLTTY</sequence>
<accession>Q4QKA1</accession>
<feature type="chain" id="PRO_0000227162" description="Anthranilate phosphoribosyltransferase">
    <location>
        <begin position="1"/>
        <end position="333"/>
    </location>
</feature>
<feature type="binding site" evidence="1">
    <location>
        <position position="81"/>
    </location>
    <ligand>
        <name>5-phospho-alpha-D-ribose 1-diphosphate</name>
        <dbReference type="ChEBI" id="CHEBI:58017"/>
    </ligand>
</feature>
<feature type="binding site" evidence="1">
    <location>
        <position position="81"/>
    </location>
    <ligand>
        <name>anthranilate</name>
        <dbReference type="ChEBI" id="CHEBI:16567"/>
        <label>1</label>
    </ligand>
</feature>
<feature type="binding site" evidence="1">
    <location>
        <begin position="84"/>
        <end position="85"/>
    </location>
    <ligand>
        <name>5-phospho-alpha-D-ribose 1-diphosphate</name>
        <dbReference type="ChEBI" id="CHEBI:58017"/>
    </ligand>
</feature>
<feature type="binding site" evidence="1">
    <location>
        <position position="89"/>
    </location>
    <ligand>
        <name>5-phospho-alpha-D-ribose 1-diphosphate</name>
        <dbReference type="ChEBI" id="CHEBI:58017"/>
    </ligand>
</feature>
<feature type="binding site" evidence="1">
    <location>
        <begin position="91"/>
        <end position="94"/>
    </location>
    <ligand>
        <name>5-phospho-alpha-D-ribose 1-diphosphate</name>
        <dbReference type="ChEBI" id="CHEBI:58017"/>
    </ligand>
</feature>
<feature type="binding site" evidence="1">
    <location>
        <position position="93"/>
    </location>
    <ligand>
        <name>Mg(2+)</name>
        <dbReference type="ChEBI" id="CHEBI:18420"/>
        <label>1</label>
    </ligand>
</feature>
<feature type="binding site" evidence="1">
    <location>
        <begin position="109"/>
        <end position="117"/>
    </location>
    <ligand>
        <name>5-phospho-alpha-D-ribose 1-diphosphate</name>
        <dbReference type="ChEBI" id="CHEBI:58017"/>
    </ligand>
</feature>
<feature type="binding site" evidence="1">
    <location>
        <position position="112"/>
    </location>
    <ligand>
        <name>anthranilate</name>
        <dbReference type="ChEBI" id="CHEBI:16567"/>
        <label>1</label>
    </ligand>
</feature>
<feature type="binding site" evidence="1">
    <location>
        <position position="121"/>
    </location>
    <ligand>
        <name>5-phospho-alpha-D-ribose 1-diphosphate</name>
        <dbReference type="ChEBI" id="CHEBI:58017"/>
    </ligand>
</feature>
<feature type="binding site" evidence="1">
    <location>
        <position position="167"/>
    </location>
    <ligand>
        <name>anthranilate</name>
        <dbReference type="ChEBI" id="CHEBI:16567"/>
        <label>2</label>
    </ligand>
</feature>
<feature type="binding site" evidence="1">
    <location>
        <position position="225"/>
    </location>
    <ligand>
        <name>Mg(2+)</name>
        <dbReference type="ChEBI" id="CHEBI:18420"/>
        <label>2</label>
    </ligand>
</feature>
<feature type="binding site" evidence="1">
    <location>
        <position position="226"/>
    </location>
    <ligand>
        <name>Mg(2+)</name>
        <dbReference type="ChEBI" id="CHEBI:18420"/>
        <label>1</label>
    </ligand>
</feature>
<feature type="binding site" evidence="1">
    <location>
        <position position="226"/>
    </location>
    <ligand>
        <name>Mg(2+)</name>
        <dbReference type="ChEBI" id="CHEBI:18420"/>
        <label>2</label>
    </ligand>
</feature>
<reference key="1">
    <citation type="journal article" date="2005" name="J. Bacteriol.">
        <title>Genomic sequence of an otitis media isolate of nontypeable Haemophilus influenzae: comparative study with H. influenzae serotype d, strain KW20.</title>
        <authorList>
            <person name="Harrison A."/>
            <person name="Dyer D.W."/>
            <person name="Gillaspy A."/>
            <person name="Ray W.C."/>
            <person name="Mungur R."/>
            <person name="Carson M.B."/>
            <person name="Zhong H."/>
            <person name="Gipson J."/>
            <person name="Gipson M."/>
            <person name="Johnson L.S."/>
            <person name="Lewis L."/>
            <person name="Bakaletz L.O."/>
            <person name="Munson R.S. Jr."/>
        </authorList>
    </citation>
    <scope>NUCLEOTIDE SEQUENCE [LARGE SCALE GENOMIC DNA]</scope>
    <source>
        <strain>86-028NP</strain>
    </source>
</reference>
<comment type="function">
    <text evidence="1">Catalyzes the transfer of the phosphoribosyl group of 5-phosphorylribose-1-pyrophosphate (PRPP) to anthranilate to yield N-(5'-phosphoribosyl)-anthranilate (PRA).</text>
</comment>
<comment type="catalytic activity">
    <reaction evidence="1">
        <text>N-(5-phospho-beta-D-ribosyl)anthranilate + diphosphate = 5-phospho-alpha-D-ribose 1-diphosphate + anthranilate</text>
        <dbReference type="Rhea" id="RHEA:11768"/>
        <dbReference type="ChEBI" id="CHEBI:16567"/>
        <dbReference type="ChEBI" id="CHEBI:18277"/>
        <dbReference type="ChEBI" id="CHEBI:33019"/>
        <dbReference type="ChEBI" id="CHEBI:58017"/>
        <dbReference type="EC" id="2.4.2.18"/>
    </reaction>
</comment>
<comment type="cofactor">
    <cofactor evidence="1">
        <name>Mg(2+)</name>
        <dbReference type="ChEBI" id="CHEBI:18420"/>
    </cofactor>
    <text evidence="1">Binds 2 magnesium ions per monomer.</text>
</comment>
<comment type="pathway">
    <text evidence="1">Amino-acid biosynthesis; L-tryptophan biosynthesis; L-tryptophan from chorismate: step 2/5.</text>
</comment>
<comment type="subunit">
    <text evidence="1">Homodimer.</text>
</comment>
<comment type="similarity">
    <text evidence="1">Belongs to the anthranilate phosphoribosyltransferase family.</text>
</comment>
<evidence type="ECO:0000255" key="1">
    <source>
        <dbReference type="HAMAP-Rule" id="MF_00211"/>
    </source>
</evidence>
<keyword id="KW-0028">Amino-acid biosynthesis</keyword>
<keyword id="KW-0057">Aromatic amino acid biosynthesis</keyword>
<keyword id="KW-0328">Glycosyltransferase</keyword>
<keyword id="KW-0460">Magnesium</keyword>
<keyword id="KW-0479">Metal-binding</keyword>
<keyword id="KW-0808">Transferase</keyword>
<keyword id="KW-0822">Tryptophan biosynthesis</keyword>
<organism>
    <name type="scientific">Haemophilus influenzae (strain 86-028NP)</name>
    <dbReference type="NCBI Taxonomy" id="281310"/>
    <lineage>
        <taxon>Bacteria</taxon>
        <taxon>Pseudomonadati</taxon>
        <taxon>Pseudomonadota</taxon>
        <taxon>Gammaproteobacteria</taxon>
        <taxon>Pasteurellales</taxon>
        <taxon>Pasteurellaceae</taxon>
        <taxon>Haemophilus</taxon>
    </lineage>
</organism>
<dbReference type="EC" id="2.4.2.18" evidence="1"/>
<dbReference type="EMBL" id="CP000057">
    <property type="protein sequence ID" value="AAX88546.1"/>
    <property type="molecule type" value="Genomic_DNA"/>
</dbReference>
<dbReference type="RefSeq" id="WP_005687194.1">
    <property type="nucleotide sequence ID" value="NC_007146.2"/>
</dbReference>
<dbReference type="SMR" id="Q4QKA1"/>
<dbReference type="GeneID" id="93220483"/>
<dbReference type="KEGG" id="hit:NTHI1764"/>
<dbReference type="HOGENOM" id="CLU_034315_2_1_6"/>
<dbReference type="UniPathway" id="UPA00035">
    <property type="reaction ID" value="UER00041"/>
</dbReference>
<dbReference type="Proteomes" id="UP000002525">
    <property type="component" value="Chromosome"/>
</dbReference>
<dbReference type="GO" id="GO:0005829">
    <property type="term" value="C:cytosol"/>
    <property type="evidence" value="ECO:0007669"/>
    <property type="project" value="TreeGrafter"/>
</dbReference>
<dbReference type="GO" id="GO:0004048">
    <property type="term" value="F:anthranilate phosphoribosyltransferase activity"/>
    <property type="evidence" value="ECO:0007669"/>
    <property type="project" value="UniProtKB-UniRule"/>
</dbReference>
<dbReference type="GO" id="GO:0000287">
    <property type="term" value="F:magnesium ion binding"/>
    <property type="evidence" value="ECO:0007669"/>
    <property type="project" value="UniProtKB-UniRule"/>
</dbReference>
<dbReference type="GO" id="GO:0000162">
    <property type="term" value="P:L-tryptophan biosynthetic process"/>
    <property type="evidence" value="ECO:0007669"/>
    <property type="project" value="UniProtKB-UniRule"/>
</dbReference>
<dbReference type="FunFam" id="1.20.970.10:FF:000003">
    <property type="entry name" value="Anthranilate phosphoribosyltransferase"/>
    <property type="match status" value="1"/>
</dbReference>
<dbReference type="FunFam" id="3.40.1030.10:FF:000002">
    <property type="entry name" value="Anthranilate phosphoribosyltransferase"/>
    <property type="match status" value="1"/>
</dbReference>
<dbReference type="Gene3D" id="3.40.1030.10">
    <property type="entry name" value="Nucleoside phosphorylase/phosphoribosyltransferase catalytic domain"/>
    <property type="match status" value="1"/>
</dbReference>
<dbReference type="Gene3D" id="1.20.970.10">
    <property type="entry name" value="Transferase, Pyrimidine Nucleoside Phosphorylase, Chain C"/>
    <property type="match status" value="1"/>
</dbReference>
<dbReference type="HAMAP" id="MF_00211">
    <property type="entry name" value="TrpD"/>
    <property type="match status" value="1"/>
</dbReference>
<dbReference type="InterPro" id="IPR005940">
    <property type="entry name" value="Anthranilate_Pribosyl_Tfrase"/>
</dbReference>
<dbReference type="InterPro" id="IPR000312">
    <property type="entry name" value="Glycosyl_Trfase_fam3"/>
</dbReference>
<dbReference type="InterPro" id="IPR017459">
    <property type="entry name" value="Glycosyl_Trfase_fam3_N_dom"/>
</dbReference>
<dbReference type="InterPro" id="IPR036320">
    <property type="entry name" value="Glycosyl_Trfase_fam3_N_dom_sf"/>
</dbReference>
<dbReference type="InterPro" id="IPR035902">
    <property type="entry name" value="Nuc_phospho_transferase"/>
</dbReference>
<dbReference type="NCBIfam" id="TIGR01245">
    <property type="entry name" value="trpD"/>
    <property type="match status" value="1"/>
</dbReference>
<dbReference type="PANTHER" id="PTHR43285">
    <property type="entry name" value="ANTHRANILATE PHOSPHORIBOSYLTRANSFERASE"/>
    <property type="match status" value="1"/>
</dbReference>
<dbReference type="PANTHER" id="PTHR43285:SF2">
    <property type="entry name" value="ANTHRANILATE PHOSPHORIBOSYLTRANSFERASE"/>
    <property type="match status" value="1"/>
</dbReference>
<dbReference type="Pfam" id="PF02885">
    <property type="entry name" value="Glycos_trans_3N"/>
    <property type="match status" value="1"/>
</dbReference>
<dbReference type="Pfam" id="PF00591">
    <property type="entry name" value="Glycos_transf_3"/>
    <property type="match status" value="1"/>
</dbReference>
<dbReference type="SUPFAM" id="SSF52418">
    <property type="entry name" value="Nucleoside phosphorylase/phosphoribosyltransferase catalytic domain"/>
    <property type="match status" value="1"/>
</dbReference>
<dbReference type="SUPFAM" id="SSF47648">
    <property type="entry name" value="Nucleoside phosphorylase/phosphoribosyltransferase N-terminal domain"/>
    <property type="match status" value="1"/>
</dbReference>